<accession>A5G209</accession>
<gene>
    <name evidence="1" type="primary">rlmN</name>
    <name type="ordered locus">Acry_2700</name>
</gene>
<name>RLMN_ACICJ</name>
<keyword id="KW-0004">4Fe-4S</keyword>
<keyword id="KW-0963">Cytoplasm</keyword>
<keyword id="KW-1015">Disulfide bond</keyword>
<keyword id="KW-0408">Iron</keyword>
<keyword id="KW-0411">Iron-sulfur</keyword>
<keyword id="KW-0479">Metal-binding</keyword>
<keyword id="KW-0489">Methyltransferase</keyword>
<keyword id="KW-1185">Reference proteome</keyword>
<keyword id="KW-0698">rRNA processing</keyword>
<keyword id="KW-0949">S-adenosyl-L-methionine</keyword>
<keyword id="KW-0808">Transferase</keyword>
<keyword id="KW-0819">tRNA processing</keyword>
<reference key="1">
    <citation type="submission" date="2007-05" db="EMBL/GenBank/DDBJ databases">
        <title>Complete sequence of chromosome of Acidiphilium cryptum JF-5.</title>
        <authorList>
            <consortium name="US DOE Joint Genome Institute"/>
            <person name="Copeland A."/>
            <person name="Lucas S."/>
            <person name="Lapidus A."/>
            <person name="Barry K."/>
            <person name="Detter J.C."/>
            <person name="Glavina del Rio T."/>
            <person name="Hammon N."/>
            <person name="Israni S."/>
            <person name="Dalin E."/>
            <person name="Tice H."/>
            <person name="Pitluck S."/>
            <person name="Sims D."/>
            <person name="Brettin T."/>
            <person name="Bruce D."/>
            <person name="Han C."/>
            <person name="Schmutz J."/>
            <person name="Larimer F."/>
            <person name="Land M."/>
            <person name="Hauser L."/>
            <person name="Kyrpides N."/>
            <person name="Kim E."/>
            <person name="Magnuson T."/>
            <person name="Richardson P."/>
        </authorList>
    </citation>
    <scope>NUCLEOTIDE SEQUENCE [LARGE SCALE GENOMIC DNA]</scope>
    <source>
        <strain>JF-5</strain>
    </source>
</reference>
<sequence>MRADAPATDGLDEAARARILAKAALFAPPSNELADGRRDLVGLSREELAAAMAEIGEQPFRAKQLWHWIYHQGVTDFAAMANIAKPLRAKLAERFAIGRPEVAADHLSADETRKMLFRFRDHEAVETVYIPDVTEDRGAVCLSSQVGCTLSCRFCHTGTQRLTRNLSAAEIVGQFMAMRDAYGEWPSPKGETPRLLSTIVLMGMGEPLYNYENVAKAMKIVMDGEGIGLSRRRITLSTSGVVPMMDRAGAELGVNLAVSLHAVTDDVRDVIVPLNRKYNIAELIAACRRYPGASNARRITFEYVMLKGINDSEADARRLVELIDGIPAKVNLIPFNPWPGSTYETSSGNAIRRFANIVMDAGYAAPVRTPRGQDILAACGQLKSKVAGAA</sequence>
<proteinExistence type="inferred from homology"/>
<evidence type="ECO:0000255" key="1">
    <source>
        <dbReference type="HAMAP-Rule" id="MF_01849"/>
    </source>
</evidence>
<evidence type="ECO:0000255" key="2">
    <source>
        <dbReference type="PROSITE-ProRule" id="PRU01266"/>
    </source>
</evidence>
<protein>
    <recommendedName>
        <fullName evidence="1">Dual-specificity RNA methyltransferase RlmN</fullName>
        <ecNumber evidence="1">2.1.1.192</ecNumber>
    </recommendedName>
    <alternativeName>
        <fullName evidence="1">23S rRNA (adenine(2503)-C(2))-methyltransferase</fullName>
    </alternativeName>
    <alternativeName>
        <fullName evidence="1">23S rRNA m2A2503 methyltransferase</fullName>
    </alternativeName>
    <alternativeName>
        <fullName evidence="1">Ribosomal RNA large subunit methyltransferase N</fullName>
    </alternativeName>
    <alternativeName>
        <fullName evidence="1">tRNA (adenine(37)-C(2))-methyltransferase</fullName>
    </alternativeName>
    <alternativeName>
        <fullName evidence="1">tRNA m2A37 methyltransferase</fullName>
    </alternativeName>
</protein>
<dbReference type="EC" id="2.1.1.192" evidence="1"/>
<dbReference type="EMBL" id="CP000697">
    <property type="protein sequence ID" value="ABQ31891.1"/>
    <property type="molecule type" value="Genomic_DNA"/>
</dbReference>
<dbReference type="RefSeq" id="WP_012040247.1">
    <property type="nucleotide sequence ID" value="NC_009484.1"/>
</dbReference>
<dbReference type="SMR" id="A5G209"/>
<dbReference type="STRING" id="349163.Acry_2700"/>
<dbReference type="KEGG" id="acr:Acry_2700"/>
<dbReference type="eggNOG" id="COG0820">
    <property type="taxonomic scope" value="Bacteria"/>
</dbReference>
<dbReference type="HOGENOM" id="CLU_029101_2_0_5"/>
<dbReference type="Proteomes" id="UP000000245">
    <property type="component" value="Chromosome"/>
</dbReference>
<dbReference type="GO" id="GO:0005737">
    <property type="term" value="C:cytoplasm"/>
    <property type="evidence" value="ECO:0007669"/>
    <property type="project" value="UniProtKB-SubCell"/>
</dbReference>
<dbReference type="GO" id="GO:0051539">
    <property type="term" value="F:4 iron, 4 sulfur cluster binding"/>
    <property type="evidence" value="ECO:0007669"/>
    <property type="project" value="UniProtKB-UniRule"/>
</dbReference>
<dbReference type="GO" id="GO:0046872">
    <property type="term" value="F:metal ion binding"/>
    <property type="evidence" value="ECO:0007669"/>
    <property type="project" value="UniProtKB-KW"/>
</dbReference>
<dbReference type="GO" id="GO:0070040">
    <property type="term" value="F:rRNA (adenine(2503)-C2-)-methyltransferase activity"/>
    <property type="evidence" value="ECO:0007669"/>
    <property type="project" value="UniProtKB-UniRule"/>
</dbReference>
<dbReference type="GO" id="GO:0019843">
    <property type="term" value="F:rRNA binding"/>
    <property type="evidence" value="ECO:0007669"/>
    <property type="project" value="UniProtKB-UniRule"/>
</dbReference>
<dbReference type="GO" id="GO:0002935">
    <property type="term" value="F:tRNA (adenine(37)-C2)-methyltransferase activity"/>
    <property type="evidence" value="ECO:0007669"/>
    <property type="project" value="UniProtKB-UniRule"/>
</dbReference>
<dbReference type="GO" id="GO:0000049">
    <property type="term" value="F:tRNA binding"/>
    <property type="evidence" value="ECO:0007669"/>
    <property type="project" value="UniProtKB-UniRule"/>
</dbReference>
<dbReference type="GO" id="GO:0070475">
    <property type="term" value="P:rRNA base methylation"/>
    <property type="evidence" value="ECO:0007669"/>
    <property type="project" value="UniProtKB-UniRule"/>
</dbReference>
<dbReference type="GO" id="GO:0030488">
    <property type="term" value="P:tRNA methylation"/>
    <property type="evidence" value="ECO:0007669"/>
    <property type="project" value="UniProtKB-UniRule"/>
</dbReference>
<dbReference type="CDD" id="cd01335">
    <property type="entry name" value="Radical_SAM"/>
    <property type="match status" value="1"/>
</dbReference>
<dbReference type="Gene3D" id="1.10.150.530">
    <property type="match status" value="1"/>
</dbReference>
<dbReference type="Gene3D" id="3.20.20.70">
    <property type="entry name" value="Aldolase class I"/>
    <property type="match status" value="1"/>
</dbReference>
<dbReference type="HAMAP" id="MF_01849">
    <property type="entry name" value="RNA_methyltr_RlmN"/>
    <property type="match status" value="1"/>
</dbReference>
<dbReference type="InterPro" id="IPR013785">
    <property type="entry name" value="Aldolase_TIM"/>
</dbReference>
<dbReference type="InterPro" id="IPR040072">
    <property type="entry name" value="Methyltransferase_A"/>
</dbReference>
<dbReference type="InterPro" id="IPR048641">
    <property type="entry name" value="RlmN_N"/>
</dbReference>
<dbReference type="InterPro" id="IPR027492">
    <property type="entry name" value="RNA_MTrfase_RlmN"/>
</dbReference>
<dbReference type="InterPro" id="IPR004383">
    <property type="entry name" value="rRNA_lsu_MTrfase_RlmN/Cfr"/>
</dbReference>
<dbReference type="InterPro" id="IPR007197">
    <property type="entry name" value="rSAM"/>
</dbReference>
<dbReference type="NCBIfam" id="TIGR00048">
    <property type="entry name" value="rRNA_mod_RlmN"/>
    <property type="match status" value="1"/>
</dbReference>
<dbReference type="PANTHER" id="PTHR30544">
    <property type="entry name" value="23S RRNA METHYLTRANSFERASE"/>
    <property type="match status" value="1"/>
</dbReference>
<dbReference type="PANTHER" id="PTHR30544:SF5">
    <property type="entry name" value="RADICAL SAM CORE DOMAIN-CONTAINING PROTEIN"/>
    <property type="match status" value="1"/>
</dbReference>
<dbReference type="Pfam" id="PF04055">
    <property type="entry name" value="Radical_SAM"/>
    <property type="match status" value="1"/>
</dbReference>
<dbReference type="Pfam" id="PF21016">
    <property type="entry name" value="RlmN_N"/>
    <property type="match status" value="1"/>
</dbReference>
<dbReference type="PIRSF" id="PIRSF006004">
    <property type="entry name" value="CHP00048"/>
    <property type="match status" value="1"/>
</dbReference>
<dbReference type="SFLD" id="SFLDF00275">
    <property type="entry name" value="adenosine_C2_methyltransferase"/>
    <property type="match status" value="1"/>
</dbReference>
<dbReference type="SFLD" id="SFLDG01062">
    <property type="entry name" value="methyltransferase_(Class_A)"/>
    <property type="match status" value="1"/>
</dbReference>
<dbReference type="SUPFAM" id="SSF102114">
    <property type="entry name" value="Radical SAM enzymes"/>
    <property type="match status" value="1"/>
</dbReference>
<dbReference type="PROSITE" id="PS51918">
    <property type="entry name" value="RADICAL_SAM"/>
    <property type="match status" value="1"/>
</dbReference>
<organism>
    <name type="scientific">Acidiphilium cryptum (strain JF-5)</name>
    <dbReference type="NCBI Taxonomy" id="349163"/>
    <lineage>
        <taxon>Bacteria</taxon>
        <taxon>Pseudomonadati</taxon>
        <taxon>Pseudomonadota</taxon>
        <taxon>Alphaproteobacteria</taxon>
        <taxon>Acetobacterales</taxon>
        <taxon>Acidocellaceae</taxon>
        <taxon>Acidiphilium</taxon>
    </lineage>
</organism>
<feature type="chain" id="PRO_0000349992" description="Dual-specificity RNA methyltransferase RlmN">
    <location>
        <begin position="1"/>
        <end position="390"/>
    </location>
</feature>
<feature type="domain" description="Radical SAM core" evidence="2">
    <location>
        <begin position="134"/>
        <end position="374"/>
    </location>
</feature>
<feature type="active site" description="Proton acceptor" evidence="1">
    <location>
        <position position="126"/>
    </location>
</feature>
<feature type="active site" description="S-methylcysteine intermediate" evidence="1">
    <location>
        <position position="379"/>
    </location>
</feature>
<feature type="binding site" evidence="1">
    <location>
        <position position="148"/>
    </location>
    <ligand>
        <name>[4Fe-4S] cluster</name>
        <dbReference type="ChEBI" id="CHEBI:49883"/>
        <note>4Fe-4S-S-AdoMet</note>
    </ligand>
</feature>
<feature type="binding site" evidence="1">
    <location>
        <position position="152"/>
    </location>
    <ligand>
        <name>[4Fe-4S] cluster</name>
        <dbReference type="ChEBI" id="CHEBI:49883"/>
        <note>4Fe-4S-S-AdoMet</note>
    </ligand>
</feature>
<feature type="binding site" evidence="1">
    <location>
        <position position="155"/>
    </location>
    <ligand>
        <name>[4Fe-4S] cluster</name>
        <dbReference type="ChEBI" id="CHEBI:49883"/>
        <note>4Fe-4S-S-AdoMet</note>
    </ligand>
</feature>
<feature type="binding site" evidence="1">
    <location>
        <begin position="205"/>
        <end position="206"/>
    </location>
    <ligand>
        <name>S-adenosyl-L-methionine</name>
        <dbReference type="ChEBI" id="CHEBI:59789"/>
    </ligand>
</feature>
<feature type="binding site" evidence="1">
    <location>
        <position position="237"/>
    </location>
    <ligand>
        <name>S-adenosyl-L-methionine</name>
        <dbReference type="ChEBI" id="CHEBI:59789"/>
    </ligand>
</feature>
<feature type="binding site" evidence="1">
    <location>
        <begin position="259"/>
        <end position="261"/>
    </location>
    <ligand>
        <name>S-adenosyl-L-methionine</name>
        <dbReference type="ChEBI" id="CHEBI:59789"/>
    </ligand>
</feature>
<feature type="binding site" evidence="1">
    <location>
        <position position="336"/>
    </location>
    <ligand>
        <name>S-adenosyl-L-methionine</name>
        <dbReference type="ChEBI" id="CHEBI:59789"/>
    </ligand>
</feature>
<feature type="disulfide bond" description="(transient)" evidence="1">
    <location>
        <begin position="141"/>
        <end position="379"/>
    </location>
</feature>
<comment type="function">
    <text evidence="1">Specifically methylates position 2 of adenine 2503 in 23S rRNA and position 2 of adenine 37 in tRNAs. m2A2503 modification seems to play a crucial role in the proofreading step occurring at the peptidyl transferase center and thus would serve to optimize ribosomal fidelity.</text>
</comment>
<comment type="catalytic activity">
    <reaction evidence="1">
        <text>adenosine(2503) in 23S rRNA + 2 reduced [2Fe-2S]-[ferredoxin] + 2 S-adenosyl-L-methionine = 2-methyladenosine(2503) in 23S rRNA + 5'-deoxyadenosine + L-methionine + 2 oxidized [2Fe-2S]-[ferredoxin] + S-adenosyl-L-homocysteine</text>
        <dbReference type="Rhea" id="RHEA:42916"/>
        <dbReference type="Rhea" id="RHEA-COMP:10000"/>
        <dbReference type="Rhea" id="RHEA-COMP:10001"/>
        <dbReference type="Rhea" id="RHEA-COMP:10152"/>
        <dbReference type="Rhea" id="RHEA-COMP:10282"/>
        <dbReference type="ChEBI" id="CHEBI:17319"/>
        <dbReference type="ChEBI" id="CHEBI:33737"/>
        <dbReference type="ChEBI" id="CHEBI:33738"/>
        <dbReference type="ChEBI" id="CHEBI:57844"/>
        <dbReference type="ChEBI" id="CHEBI:57856"/>
        <dbReference type="ChEBI" id="CHEBI:59789"/>
        <dbReference type="ChEBI" id="CHEBI:74411"/>
        <dbReference type="ChEBI" id="CHEBI:74497"/>
        <dbReference type="EC" id="2.1.1.192"/>
    </reaction>
</comment>
<comment type="catalytic activity">
    <reaction evidence="1">
        <text>adenosine(37) in tRNA + 2 reduced [2Fe-2S]-[ferredoxin] + 2 S-adenosyl-L-methionine = 2-methyladenosine(37) in tRNA + 5'-deoxyadenosine + L-methionine + 2 oxidized [2Fe-2S]-[ferredoxin] + S-adenosyl-L-homocysteine</text>
        <dbReference type="Rhea" id="RHEA:43332"/>
        <dbReference type="Rhea" id="RHEA-COMP:10000"/>
        <dbReference type="Rhea" id="RHEA-COMP:10001"/>
        <dbReference type="Rhea" id="RHEA-COMP:10162"/>
        <dbReference type="Rhea" id="RHEA-COMP:10485"/>
        <dbReference type="ChEBI" id="CHEBI:17319"/>
        <dbReference type="ChEBI" id="CHEBI:33737"/>
        <dbReference type="ChEBI" id="CHEBI:33738"/>
        <dbReference type="ChEBI" id="CHEBI:57844"/>
        <dbReference type="ChEBI" id="CHEBI:57856"/>
        <dbReference type="ChEBI" id="CHEBI:59789"/>
        <dbReference type="ChEBI" id="CHEBI:74411"/>
        <dbReference type="ChEBI" id="CHEBI:74497"/>
        <dbReference type="EC" id="2.1.1.192"/>
    </reaction>
</comment>
<comment type="cofactor">
    <cofactor evidence="1">
        <name>[4Fe-4S] cluster</name>
        <dbReference type="ChEBI" id="CHEBI:49883"/>
    </cofactor>
    <text evidence="1">Binds 1 [4Fe-4S] cluster. The cluster is coordinated with 3 cysteines and an exchangeable S-adenosyl-L-methionine.</text>
</comment>
<comment type="subcellular location">
    <subcellularLocation>
        <location evidence="1">Cytoplasm</location>
    </subcellularLocation>
</comment>
<comment type="miscellaneous">
    <text evidence="1">Reaction proceeds by a ping-pong mechanism involving intermediate methylation of a conserved cysteine residue.</text>
</comment>
<comment type="similarity">
    <text evidence="1">Belongs to the radical SAM superfamily. RlmN family.</text>
</comment>